<dbReference type="EC" id="6.3.1.2"/>
<dbReference type="EMBL" id="X53580">
    <property type="protein sequence ID" value="CAA37643.1"/>
    <property type="molecule type" value="mRNA"/>
</dbReference>
<dbReference type="EMBL" id="X16000">
    <property type="protein sequence ID" value="CAA34131.1"/>
    <property type="molecule type" value="mRNA"/>
</dbReference>
<dbReference type="PIR" id="S11865">
    <property type="entry name" value="AJBHQ"/>
</dbReference>
<dbReference type="SMR" id="P13564"/>
<dbReference type="BRENDA" id="6.3.1.2">
    <property type="organism ID" value="2687"/>
</dbReference>
<dbReference type="SABIO-RK" id="P13564"/>
<dbReference type="ExpressionAtlas" id="P13564">
    <property type="expression patterns" value="baseline and differential"/>
</dbReference>
<dbReference type="GO" id="GO:0009507">
    <property type="term" value="C:chloroplast"/>
    <property type="evidence" value="ECO:0007669"/>
    <property type="project" value="UniProtKB-SubCell"/>
</dbReference>
<dbReference type="GO" id="GO:0005524">
    <property type="term" value="F:ATP binding"/>
    <property type="evidence" value="ECO:0007669"/>
    <property type="project" value="UniProtKB-KW"/>
</dbReference>
<dbReference type="GO" id="GO:0004356">
    <property type="term" value="F:glutamine synthetase activity"/>
    <property type="evidence" value="ECO:0007669"/>
    <property type="project" value="UniProtKB-EC"/>
</dbReference>
<dbReference type="GO" id="GO:0006542">
    <property type="term" value="P:glutamine biosynthetic process"/>
    <property type="evidence" value="ECO:0007669"/>
    <property type="project" value="InterPro"/>
</dbReference>
<dbReference type="FunFam" id="3.30.590.10:FF:000004">
    <property type="entry name" value="Glutamine synthetase"/>
    <property type="match status" value="1"/>
</dbReference>
<dbReference type="FunFam" id="3.10.20.70:FF:000003">
    <property type="entry name" value="Glutamine synthetase, chloroplastic"/>
    <property type="match status" value="1"/>
</dbReference>
<dbReference type="Gene3D" id="3.10.20.70">
    <property type="entry name" value="Glutamine synthetase, N-terminal domain"/>
    <property type="match status" value="1"/>
</dbReference>
<dbReference type="Gene3D" id="3.30.590.10">
    <property type="entry name" value="Glutamine synthetase/guanido kinase, catalytic domain"/>
    <property type="match status" value="1"/>
</dbReference>
<dbReference type="InterPro" id="IPR008147">
    <property type="entry name" value="Gln_synt_N"/>
</dbReference>
<dbReference type="InterPro" id="IPR036651">
    <property type="entry name" value="Gln_synt_N_sf"/>
</dbReference>
<dbReference type="InterPro" id="IPR014746">
    <property type="entry name" value="Gln_synth/guanido_kin_cat_dom"/>
</dbReference>
<dbReference type="InterPro" id="IPR008146">
    <property type="entry name" value="Gln_synth_cat_dom"/>
</dbReference>
<dbReference type="InterPro" id="IPR027303">
    <property type="entry name" value="Gln_synth_gly_rich_site"/>
</dbReference>
<dbReference type="InterPro" id="IPR027302">
    <property type="entry name" value="Gln_synth_N_conserv_site"/>
</dbReference>
<dbReference type="InterPro" id="IPR050292">
    <property type="entry name" value="Glutamine_Synthetase"/>
</dbReference>
<dbReference type="PANTHER" id="PTHR20852">
    <property type="entry name" value="GLUTAMINE SYNTHETASE"/>
    <property type="match status" value="1"/>
</dbReference>
<dbReference type="PANTHER" id="PTHR20852:SF118">
    <property type="entry name" value="GLUTAMINE SYNTHETASE, CHLOROPLASTIC_MITOCHONDRIAL"/>
    <property type="match status" value="1"/>
</dbReference>
<dbReference type="Pfam" id="PF00120">
    <property type="entry name" value="Gln-synt_C"/>
    <property type="match status" value="1"/>
</dbReference>
<dbReference type="Pfam" id="PF03951">
    <property type="entry name" value="Gln-synt_N"/>
    <property type="match status" value="1"/>
</dbReference>
<dbReference type="SMART" id="SM01230">
    <property type="entry name" value="Gln-synt_C"/>
    <property type="match status" value="1"/>
</dbReference>
<dbReference type="SUPFAM" id="SSF54368">
    <property type="entry name" value="Glutamine synthetase, N-terminal domain"/>
    <property type="match status" value="1"/>
</dbReference>
<dbReference type="SUPFAM" id="SSF55931">
    <property type="entry name" value="Glutamine synthetase/guanido kinase"/>
    <property type="match status" value="1"/>
</dbReference>
<dbReference type="PROSITE" id="PS00180">
    <property type="entry name" value="GLNA_1"/>
    <property type="match status" value="1"/>
</dbReference>
<dbReference type="PROSITE" id="PS00181">
    <property type="entry name" value="GLNA_ATP"/>
    <property type="match status" value="1"/>
</dbReference>
<dbReference type="PROSITE" id="PS51986">
    <property type="entry name" value="GS_BETA_GRASP"/>
    <property type="match status" value="1"/>
</dbReference>
<dbReference type="PROSITE" id="PS51987">
    <property type="entry name" value="GS_CATALYTIC"/>
    <property type="match status" value="1"/>
</dbReference>
<sequence length="434" mass="47094">MQVRRDDDGAGGCAGDAVPGGGEGQDGVPARQPAGRVWGVSRAARATSGFKVLALGPETTGVIQRMQQLLDMDTTPFTDKIIAEYIWVGGSGIDLRSKSRTISKPVEDPSELPKWNYDGSSTGQAPGEDSEVILYPQAIFKDPFRGGNNILVICDTYTPQGEPIPTNKRHMAAQIFSDPKVTSQVPWFGIEQEYTLMQRDVNWPLGWPVGGYPGPQGPYYCAVGSDKSFGRDISDAHYKACLYAGIEISGTNGEVMPGQWEYQVGPSVGIDAGDHIWASRYILERITEQAGVVLTLDPKPIQGDWNGAGCHTNYSTLSMREDGGFDVIKKAILNLSLRHDLHIAAYGEGNERRLTGLHETASISDFSWGVANRGCSIRVGRDTEAKGKGYLEDRRPASNMDPYTVTALLAETTILWEPTLEAEALAAKKLALKV</sequence>
<reference key="1">
    <citation type="journal article" date="1990" name="Plant Mol. Biol.">
        <title>A cDNA sequence coding for glutamine synthetase in Hordeum vulgare L.</title>
        <authorList>
            <person name="Stroman P."/>
            <person name="Baima S."/>
            <person name="Casadoro G."/>
        </authorList>
    </citation>
    <scope>NUCLEOTIDE SEQUENCE [MRNA]</scope>
</reference>
<reference key="2">
    <citation type="journal article" date="1990" name="Plant Mol. Biol.">
        <title>Molecular analysis of barley mutants deficient in chloroplast glutamine synthetase.</title>
        <authorList>
            <person name="Freeman J."/>
            <person name="Marquez A.J."/>
            <person name="Wallsgrove R.M."/>
            <person name="Saarelainen R."/>
            <person name="Forde B.G."/>
        </authorList>
    </citation>
    <scope>NUCLEOTIDE SEQUENCE [MRNA] OF 9-434</scope>
    <source>
        <strain>cv. Maris Mink</strain>
        <tissue>Leaf</tissue>
    </source>
</reference>
<reference key="3">
    <citation type="journal article" date="1989" name="Carlsberg Res. Commun.">
        <title>Characterization of a cDNA clone for barley leaf glutamine synthetase.</title>
        <authorList>
            <person name="Baima S."/>
            <person name="Haegi A."/>
            <person name="Stroman P."/>
            <person name="Casadoro G."/>
        </authorList>
    </citation>
    <scope>NUCLEOTIDE SEQUENCE [MRNA] OF 48-434</scope>
</reference>
<feature type="transit peptide" description="Chloroplast">
    <location>
        <begin position="1"/>
        <end position="54"/>
    </location>
</feature>
<feature type="chain" id="PRO_0000011178" description="Glutamine synthetase leaf isozyme, chloroplastic">
    <location>
        <begin position="55"/>
        <end position="434"/>
    </location>
</feature>
<feature type="domain" description="GS beta-grasp" evidence="1">
    <location>
        <begin position="81"/>
        <end position="161"/>
    </location>
</feature>
<feature type="domain" description="GS catalytic" evidence="2">
    <location>
        <begin position="168"/>
        <end position="434"/>
    </location>
</feature>
<feature type="region of interest" description="Disordered" evidence="3">
    <location>
        <begin position="1"/>
        <end position="33"/>
    </location>
</feature>
<feature type="region of interest" description="Disordered" evidence="3">
    <location>
        <begin position="101"/>
        <end position="126"/>
    </location>
</feature>
<feature type="compositionally biased region" description="Gly residues" evidence="3">
    <location>
        <begin position="10"/>
        <end position="25"/>
    </location>
</feature>
<feature type="sequence conflict" description="In Ref. 2; CAA34131." evidence="4" ref="2">
    <original>GAGGCAGDAVPGGGEGQDG</original>
    <variation>AQAVVQAMQCQVGVRGRTA</variation>
    <location>
        <begin position="9"/>
        <end position="27"/>
    </location>
</feature>
<feature type="sequence conflict" description="In Ref. 2; CAA34131." evidence="4" ref="2">
    <original>S</original>
    <variation>R</variation>
    <location>
        <position position="41"/>
    </location>
</feature>
<name>GLNA2_HORVU</name>
<protein>
    <recommendedName>
        <fullName>Glutamine synthetase leaf isozyme, chloroplastic</fullName>
        <ecNumber>6.3.1.2</ecNumber>
    </recommendedName>
    <alternativeName>
        <fullName>GS2</fullName>
    </alternativeName>
    <alternativeName>
        <fullName>Glutamate--ammonia ligase</fullName>
    </alternativeName>
</protein>
<accession>P13564</accession>
<keyword id="KW-0067">ATP-binding</keyword>
<keyword id="KW-0150">Chloroplast</keyword>
<keyword id="KW-0436">Ligase</keyword>
<keyword id="KW-0547">Nucleotide-binding</keyword>
<keyword id="KW-0934">Plastid</keyword>
<keyword id="KW-0809">Transit peptide</keyword>
<comment type="function">
    <text>The light-modulated chloroplast enzyme, encoded by a nuclear gene and expressed primarily in leaves, is responsible for the reassimilation of the ammonia generated by photorespiration.</text>
</comment>
<comment type="catalytic activity">
    <reaction>
        <text>L-glutamate + NH4(+) + ATP = L-glutamine + ADP + phosphate + H(+)</text>
        <dbReference type="Rhea" id="RHEA:16169"/>
        <dbReference type="ChEBI" id="CHEBI:15378"/>
        <dbReference type="ChEBI" id="CHEBI:28938"/>
        <dbReference type="ChEBI" id="CHEBI:29985"/>
        <dbReference type="ChEBI" id="CHEBI:30616"/>
        <dbReference type="ChEBI" id="CHEBI:43474"/>
        <dbReference type="ChEBI" id="CHEBI:58359"/>
        <dbReference type="ChEBI" id="CHEBI:456216"/>
        <dbReference type="EC" id="6.3.1.2"/>
    </reaction>
</comment>
<comment type="subunit">
    <text>Homooctamer.</text>
</comment>
<comment type="subcellular location">
    <subcellularLocation>
        <location>Plastid</location>
        <location>Chloroplast</location>
    </subcellularLocation>
</comment>
<comment type="miscellaneous">
    <text>In barley, there are distinct isozymes in the chloroplast, and cytoplasm.</text>
</comment>
<comment type="similarity">
    <text evidence="4">Belongs to the glutamine synthetase family.</text>
</comment>
<evidence type="ECO:0000255" key="1">
    <source>
        <dbReference type="PROSITE-ProRule" id="PRU01330"/>
    </source>
</evidence>
<evidence type="ECO:0000255" key="2">
    <source>
        <dbReference type="PROSITE-ProRule" id="PRU01331"/>
    </source>
</evidence>
<evidence type="ECO:0000256" key="3">
    <source>
        <dbReference type="SAM" id="MobiDB-lite"/>
    </source>
</evidence>
<evidence type="ECO:0000305" key="4"/>
<organism>
    <name type="scientific">Hordeum vulgare</name>
    <name type="common">Barley</name>
    <dbReference type="NCBI Taxonomy" id="4513"/>
    <lineage>
        <taxon>Eukaryota</taxon>
        <taxon>Viridiplantae</taxon>
        <taxon>Streptophyta</taxon>
        <taxon>Embryophyta</taxon>
        <taxon>Tracheophyta</taxon>
        <taxon>Spermatophyta</taxon>
        <taxon>Magnoliopsida</taxon>
        <taxon>Liliopsida</taxon>
        <taxon>Poales</taxon>
        <taxon>Poaceae</taxon>
        <taxon>BOP clade</taxon>
        <taxon>Pooideae</taxon>
        <taxon>Triticodae</taxon>
        <taxon>Triticeae</taxon>
        <taxon>Hordeinae</taxon>
        <taxon>Hordeum</taxon>
    </lineage>
</organism>
<proteinExistence type="evidence at transcript level"/>